<name>APBP2_RAT</name>
<organism>
    <name type="scientific">Rattus norvegicus</name>
    <name type="common">Rat</name>
    <dbReference type="NCBI Taxonomy" id="10116"/>
    <lineage>
        <taxon>Eukaryota</taxon>
        <taxon>Metazoa</taxon>
        <taxon>Chordata</taxon>
        <taxon>Craniata</taxon>
        <taxon>Vertebrata</taxon>
        <taxon>Euteleostomi</taxon>
        <taxon>Mammalia</taxon>
        <taxon>Eutheria</taxon>
        <taxon>Euarchontoglires</taxon>
        <taxon>Glires</taxon>
        <taxon>Rodentia</taxon>
        <taxon>Myomorpha</taxon>
        <taxon>Muroidea</taxon>
        <taxon>Muridae</taxon>
        <taxon>Murinae</taxon>
        <taxon>Rattus</taxon>
    </lineage>
</organism>
<sequence length="585" mass="66902">MAAVELEWIPETLYNTAISAVVDNYIRSRRDIRSLPENIQFDVYYKLYQQGRLCQLGSEFCELEVFAKVLRALDKRHLLHHCFQALMDHGVKVASVLAYSFSRRCSYIAESDAAVKEKAIQVGFVLGGFLSDAGWYSDAEKVFLSCLQLCTLHDEMLHWFRAVECCVRLLHVRNGNCKYHLGEETFKLAQTYMDKLSKHGQQANRAALYGELCALLFAKSHYDEAYKWCVEAMKEITSGLPVKVVVDVLRQASKACVVKREFKKAEQLIKHAVYLARDHFGSKHPKYSDTLLDYGFYLLNVDNICQSVAIYQAALDIRQSVFGGKNIHVATAHEDLAYSSYVHQYSSGKFDNALFHAERAIGIITHILPEDHLLLASSKRVKALILEEIAIDCHNKETEQRLLQEAHDLHLSSLQLAKKAFGEFNVQTAKHYGNLGRLYQSMRKFKEAEEMHIKAIQIKEQLLGQEDYEVALSVGHLASLYNYDMNQYENAEKLYLRSIAIGKKLFGEGYSGLEYDYRGLIKLYNSTGNYEKVFEYHNVLSNWNRLRDRQYSVTDALEDVNSSPQSTEEVVQSFLMSQNVEGPSC</sequence>
<reference key="1">
    <citation type="submission" date="2007-04" db="EMBL/GenBank/DDBJ databases">
        <title>The neuronal glycine transporter GlyT2 interacts with subunits of microtubule-dependent motor proteins.</title>
        <authorList>
            <person name="Scholze P."/>
            <person name="Armsen W."/>
            <person name="Eulenburg V."/>
            <person name="Horiuchi M."/>
            <person name="Zeitelhofer M."/>
            <person name="Tuebing F."/>
            <person name="Dahm R."/>
            <person name="Betz H."/>
        </authorList>
    </citation>
    <scope>NUCLEOTIDE SEQUENCE [MRNA]</scope>
</reference>
<reference key="2">
    <citation type="journal article" date="2004" name="Genome Res.">
        <title>The status, quality, and expansion of the NIH full-length cDNA project: the Mammalian Gene Collection (MGC).</title>
        <authorList>
            <consortium name="The MGC Project Team"/>
        </authorList>
    </citation>
    <scope>NUCLEOTIDE SEQUENCE [LARGE SCALE MRNA] OF 52-585</scope>
    <source>
        <tissue>Ovary</tissue>
    </source>
</reference>
<comment type="function">
    <text evidence="1">Substrate-recognition component of a Cul2-RING (CRL2) E3 ubiquitin-protein ligase complex of the DesCEND (destruction via C-end degrons) pathway, which recognizes a C-degron located at the extreme C terminus of target proteins, leading to their ubiquitination and degradation. The C-degron recognized by the DesCEND pathway is usually a motif of less than ten residues and can be present in full-length proteins, truncated proteins or proteolytically cleaved forms. The CRL2(APPBP2) complex specifically recognizes proteins with a -Arg-Xaa-Xaa-Gly degron at the C-terminus, leading to their ubiquitination and degradation. The CRL2(APPBP2) complex mediates ubiquitination and degradation of truncated SELENOV selenoproteins produced by failed UGA/Sec decoding, which end with a -Arg-Xaa-Xaa-Gly degron. May play a role in intracellular protein transport: may be involved in the translocation of APP along microtubules toward the cell surface.</text>
</comment>
<comment type="activity regulation">
    <text evidence="1">E3 ubiquitin-protein ligase activity of the CRL2(APPBP2) complex is inhibited by APP.</text>
</comment>
<comment type="pathway">
    <text evidence="1">Protein modification; protein ubiquitination.</text>
</comment>
<comment type="subunit">
    <text evidence="1">Component of a CRL2 E3 ubiquitin-protein ligase complex, also named ECS (Elongin BC-CUL2/5-SOCS-box protein) complex, composed of CUL2, Elongin BC (ELOB and ELOC), RBX1 and substrate-specific adapter APPBP2. Interacts with APP; APP interaction inhibits the E3 ubiquitin-protein ligase activity of the CRL2(APPBP2) complex.</text>
</comment>
<comment type="subcellular location">
    <subcellularLocation>
        <location evidence="1">Nucleus</location>
    </subcellularLocation>
    <subcellularLocation>
        <location evidence="1">Cytoplasm</location>
        <location evidence="1">Cytoskeleton</location>
    </subcellularLocation>
    <subcellularLocation>
        <location evidence="1">Membrane</location>
        <topology evidence="1">Peripheral membrane protein</topology>
    </subcellularLocation>
    <text evidence="1">Associated with membranes and microtubules.</text>
</comment>
<comment type="PTM">
    <text evidence="1">Rapidly degraded by the proteasome upon overexpression of a C-terminal fragment of APP.</text>
</comment>
<keyword id="KW-0963">Cytoplasm</keyword>
<keyword id="KW-0206">Cytoskeleton</keyword>
<keyword id="KW-0472">Membrane</keyword>
<keyword id="KW-0493">Microtubule</keyword>
<keyword id="KW-0539">Nucleus</keyword>
<keyword id="KW-0653">Protein transport</keyword>
<keyword id="KW-1185">Reference proteome</keyword>
<keyword id="KW-0677">Repeat</keyword>
<keyword id="KW-0802">TPR repeat</keyword>
<keyword id="KW-0813">Transport</keyword>
<keyword id="KW-0833">Ubl conjugation pathway</keyword>
<protein>
    <recommendedName>
        <fullName evidence="3">Amyloid protein-binding protein 2</fullName>
    </recommendedName>
    <alternativeName>
        <fullName evidence="1">Amyloid beta precursor protein-binding protein 2</fullName>
        <shortName evidence="1">APP-BP2</shortName>
    </alternativeName>
</protein>
<proteinExistence type="evidence at transcript level"/>
<gene>
    <name evidence="4" type="primary">Appbp2</name>
</gene>
<accession>A5HK05</accession>
<accession>Q5BJX9</accession>
<evidence type="ECO:0000250" key="1">
    <source>
        <dbReference type="UniProtKB" id="Q92624"/>
    </source>
</evidence>
<evidence type="ECO:0000255" key="2"/>
<evidence type="ECO:0000305" key="3"/>
<evidence type="ECO:0000312" key="4">
    <source>
        <dbReference type="RGD" id="1306488"/>
    </source>
</evidence>
<feature type="chain" id="PRO_0000296299" description="Amyloid protein-binding protein 2">
    <location>
        <begin position="1"/>
        <end position="585"/>
    </location>
</feature>
<feature type="repeat" description="TPR 1" evidence="2">
    <location>
        <begin position="50"/>
        <end position="83"/>
    </location>
</feature>
<feature type="repeat" description="TPR 2" evidence="2">
    <location>
        <begin position="120"/>
        <end position="153"/>
    </location>
</feature>
<feature type="repeat" description="TPR 3" evidence="2">
    <location>
        <begin position="206"/>
        <end position="239"/>
    </location>
</feature>
<feature type="repeat" description="TPR 4" evidence="2">
    <location>
        <begin position="288"/>
        <end position="321"/>
    </location>
</feature>
<feature type="repeat" description="TPR 5" evidence="2">
    <location>
        <begin position="333"/>
        <end position="367"/>
    </location>
</feature>
<feature type="repeat" description="TPR 6" evidence="2">
    <location>
        <begin position="429"/>
        <end position="462"/>
    </location>
</feature>
<feature type="repeat" description="TPR 7" evidence="2">
    <location>
        <begin position="471"/>
        <end position="505"/>
    </location>
</feature>
<feature type="repeat" description="TPR 8" evidence="2">
    <location>
        <begin position="514"/>
        <end position="547"/>
    </location>
</feature>
<dbReference type="EMBL" id="EF535262">
    <property type="protein sequence ID" value="ABQ00241.1"/>
    <property type="molecule type" value="mRNA"/>
</dbReference>
<dbReference type="EMBL" id="BC091285">
    <property type="protein sequence ID" value="AAH91285.1"/>
    <property type="molecule type" value="mRNA"/>
</dbReference>
<dbReference type="RefSeq" id="NP_001094439.1">
    <property type="nucleotide sequence ID" value="NM_001100969.1"/>
</dbReference>
<dbReference type="SMR" id="A5HK05"/>
<dbReference type="FunCoup" id="A5HK05">
    <property type="interactions" value="4902"/>
</dbReference>
<dbReference type="STRING" id="10116.ENSRNOP00000032753"/>
<dbReference type="iPTMnet" id="A5HK05"/>
<dbReference type="PhosphoSitePlus" id="A5HK05"/>
<dbReference type="PaxDb" id="10116-ENSRNOP00000032753"/>
<dbReference type="Ensembl" id="ENSRNOT00000033684.5">
    <property type="protein sequence ID" value="ENSRNOP00000032753.4"/>
    <property type="gene ID" value="ENSRNOG00000027654.5"/>
</dbReference>
<dbReference type="GeneID" id="303396"/>
<dbReference type="KEGG" id="rno:303396"/>
<dbReference type="AGR" id="RGD:1306488"/>
<dbReference type="CTD" id="10513"/>
<dbReference type="RGD" id="1306488">
    <property type="gene designation" value="Appbp2"/>
</dbReference>
<dbReference type="eggNOG" id="KOG1840">
    <property type="taxonomic scope" value="Eukaryota"/>
</dbReference>
<dbReference type="GeneTree" id="ENSGT00390000010722"/>
<dbReference type="HOGENOM" id="CLU_019378_1_0_1"/>
<dbReference type="InParanoid" id="A5HK05"/>
<dbReference type="OMA" id="YAESSHC"/>
<dbReference type="OrthoDB" id="7103806at2759"/>
<dbReference type="PhylomeDB" id="A5HK05"/>
<dbReference type="TreeFam" id="TF314010"/>
<dbReference type="UniPathway" id="UPA00143"/>
<dbReference type="PRO" id="PR:A5HK05"/>
<dbReference type="Proteomes" id="UP000002494">
    <property type="component" value="Chromosome 10"/>
</dbReference>
<dbReference type="Bgee" id="ENSRNOG00000027654">
    <property type="expression patterns" value="Expressed in ovary and 19 other cell types or tissues"/>
</dbReference>
<dbReference type="ExpressionAtlas" id="A5HK05">
    <property type="expression patterns" value="baseline and differential"/>
</dbReference>
<dbReference type="GO" id="GO:0031462">
    <property type="term" value="C:Cul2-RING ubiquitin ligase complex"/>
    <property type="evidence" value="ECO:0000250"/>
    <property type="project" value="UniProtKB"/>
</dbReference>
<dbReference type="GO" id="GO:0030659">
    <property type="term" value="C:cytoplasmic vesicle membrane"/>
    <property type="evidence" value="ECO:0000266"/>
    <property type="project" value="RGD"/>
</dbReference>
<dbReference type="GO" id="GO:0005874">
    <property type="term" value="C:microtubule"/>
    <property type="evidence" value="ECO:0007669"/>
    <property type="project" value="UniProtKB-KW"/>
</dbReference>
<dbReference type="GO" id="GO:0005654">
    <property type="term" value="C:nucleoplasm"/>
    <property type="evidence" value="ECO:0007669"/>
    <property type="project" value="Ensembl"/>
</dbReference>
<dbReference type="GO" id="GO:1990756">
    <property type="term" value="F:ubiquitin-like ligase-substrate adaptor activity"/>
    <property type="evidence" value="ECO:0000250"/>
    <property type="project" value="UniProtKB"/>
</dbReference>
<dbReference type="GO" id="GO:0006886">
    <property type="term" value="P:intracellular protein transport"/>
    <property type="evidence" value="ECO:0007669"/>
    <property type="project" value="InterPro"/>
</dbReference>
<dbReference type="GO" id="GO:0046907">
    <property type="term" value="P:intracellular transport"/>
    <property type="evidence" value="ECO:0000266"/>
    <property type="project" value="RGD"/>
</dbReference>
<dbReference type="GO" id="GO:0043161">
    <property type="term" value="P:proteasome-mediated ubiquitin-dependent protein catabolic process"/>
    <property type="evidence" value="ECO:0000250"/>
    <property type="project" value="UniProtKB"/>
</dbReference>
<dbReference type="GO" id="GO:0016567">
    <property type="term" value="P:protein ubiquitination"/>
    <property type="evidence" value="ECO:0007669"/>
    <property type="project" value="UniProtKB-UniPathway"/>
</dbReference>
<dbReference type="FunFam" id="1.25.40.10:FF:000177">
    <property type="entry name" value="Amyloid beta precursor protein binding protein 2"/>
    <property type="match status" value="1"/>
</dbReference>
<dbReference type="FunFam" id="1.25.40.10:FF:000152">
    <property type="entry name" value="Amyloid protein-binding protein 2 isoform 1"/>
    <property type="match status" value="1"/>
</dbReference>
<dbReference type="Gene3D" id="1.25.40.10">
    <property type="entry name" value="Tetratricopeptide repeat domain"/>
    <property type="match status" value="3"/>
</dbReference>
<dbReference type="InterPro" id="IPR042476">
    <property type="entry name" value="APPBP2"/>
</dbReference>
<dbReference type="InterPro" id="IPR011990">
    <property type="entry name" value="TPR-like_helical_dom_sf"/>
</dbReference>
<dbReference type="InterPro" id="IPR019734">
    <property type="entry name" value="TPR_rpt"/>
</dbReference>
<dbReference type="PANTHER" id="PTHR46575">
    <property type="entry name" value="AMYLOID PROTEIN-BINDING PROTEIN 2"/>
    <property type="match status" value="1"/>
</dbReference>
<dbReference type="PANTHER" id="PTHR46575:SF1">
    <property type="entry name" value="AMYLOID PROTEIN-BINDING PROTEIN 2"/>
    <property type="match status" value="1"/>
</dbReference>
<dbReference type="Pfam" id="PF13374">
    <property type="entry name" value="TPR_10"/>
    <property type="match status" value="1"/>
</dbReference>
<dbReference type="Pfam" id="PF13424">
    <property type="entry name" value="TPR_12"/>
    <property type="match status" value="1"/>
</dbReference>
<dbReference type="SMART" id="SM00028">
    <property type="entry name" value="TPR"/>
    <property type="match status" value="3"/>
</dbReference>
<dbReference type="SUPFAM" id="SSF48452">
    <property type="entry name" value="TPR-like"/>
    <property type="match status" value="2"/>
</dbReference>
<dbReference type="PROSITE" id="PS50005">
    <property type="entry name" value="TPR"/>
    <property type="match status" value="2"/>
</dbReference>
<dbReference type="PROSITE" id="PS50293">
    <property type="entry name" value="TPR_REGION"/>
    <property type="match status" value="1"/>
</dbReference>